<proteinExistence type="inferred from homology"/>
<dbReference type="EMBL" id="BA000030">
    <property type="protein sequence ID" value="BAC73281.1"/>
    <property type="molecule type" value="Genomic_DNA"/>
</dbReference>
<dbReference type="RefSeq" id="WP_010986971.1">
    <property type="nucleotide sequence ID" value="NZ_JZJK01000020.1"/>
</dbReference>
<dbReference type="SMR" id="Q82BY5"/>
<dbReference type="GeneID" id="41542658"/>
<dbReference type="KEGG" id="sma:SAVERM_5569"/>
<dbReference type="eggNOG" id="COG1420">
    <property type="taxonomic scope" value="Bacteria"/>
</dbReference>
<dbReference type="HOGENOM" id="CLU_050019_2_0_11"/>
<dbReference type="OrthoDB" id="9783139at2"/>
<dbReference type="Proteomes" id="UP000000428">
    <property type="component" value="Chromosome"/>
</dbReference>
<dbReference type="GO" id="GO:0003677">
    <property type="term" value="F:DNA binding"/>
    <property type="evidence" value="ECO:0007669"/>
    <property type="project" value="InterPro"/>
</dbReference>
<dbReference type="GO" id="GO:0045892">
    <property type="term" value="P:negative regulation of DNA-templated transcription"/>
    <property type="evidence" value="ECO:0007669"/>
    <property type="project" value="UniProtKB-UniRule"/>
</dbReference>
<dbReference type="FunFam" id="1.10.10.10:FF:000049">
    <property type="entry name" value="Heat-inducible transcription repressor HrcA"/>
    <property type="match status" value="1"/>
</dbReference>
<dbReference type="Gene3D" id="3.30.450.40">
    <property type="match status" value="1"/>
</dbReference>
<dbReference type="Gene3D" id="3.30.390.60">
    <property type="entry name" value="Heat-inducible transcription repressor hrca homolog, domain 3"/>
    <property type="match status" value="1"/>
</dbReference>
<dbReference type="Gene3D" id="1.10.10.10">
    <property type="entry name" value="Winged helix-like DNA-binding domain superfamily/Winged helix DNA-binding domain"/>
    <property type="match status" value="1"/>
</dbReference>
<dbReference type="HAMAP" id="MF_00081">
    <property type="entry name" value="HrcA"/>
    <property type="match status" value="1"/>
</dbReference>
<dbReference type="InterPro" id="IPR029016">
    <property type="entry name" value="GAF-like_dom_sf"/>
</dbReference>
<dbReference type="InterPro" id="IPR002571">
    <property type="entry name" value="HrcA"/>
</dbReference>
<dbReference type="InterPro" id="IPR021153">
    <property type="entry name" value="HrcA_C"/>
</dbReference>
<dbReference type="InterPro" id="IPR036388">
    <property type="entry name" value="WH-like_DNA-bd_sf"/>
</dbReference>
<dbReference type="InterPro" id="IPR036390">
    <property type="entry name" value="WH_DNA-bd_sf"/>
</dbReference>
<dbReference type="InterPro" id="IPR023120">
    <property type="entry name" value="WHTH_transcript_rep_HrcA_IDD"/>
</dbReference>
<dbReference type="NCBIfam" id="TIGR00331">
    <property type="entry name" value="hrcA"/>
    <property type="match status" value="1"/>
</dbReference>
<dbReference type="PANTHER" id="PTHR34824">
    <property type="entry name" value="HEAT-INDUCIBLE TRANSCRIPTION REPRESSOR HRCA"/>
    <property type="match status" value="1"/>
</dbReference>
<dbReference type="PANTHER" id="PTHR34824:SF1">
    <property type="entry name" value="HEAT-INDUCIBLE TRANSCRIPTION REPRESSOR HRCA"/>
    <property type="match status" value="1"/>
</dbReference>
<dbReference type="Pfam" id="PF01628">
    <property type="entry name" value="HrcA"/>
    <property type="match status" value="1"/>
</dbReference>
<dbReference type="PIRSF" id="PIRSF005485">
    <property type="entry name" value="HrcA"/>
    <property type="match status" value="1"/>
</dbReference>
<dbReference type="SUPFAM" id="SSF55781">
    <property type="entry name" value="GAF domain-like"/>
    <property type="match status" value="1"/>
</dbReference>
<dbReference type="SUPFAM" id="SSF46785">
    <property type="entry name" value="Winged helix' DNA-binding domain"/>
    <property type="match status" value="1"/>
</dbReference>
<sequence length="338" mass="36662">MLSERRLEVLRAIVQDYVGTEEPVGSKALTERHNLGVSPATVRNDMAALEDEGYIAQPHTSAGRIPTDRGYRLFVDKLAGVKPMTGPERRAIQNFLDGAVDLDDVVGRTVRLLAQLTRQVAVVQYPSLTRSTVRHVELLSLAPARVMLVLITDTGRVEQRMIDCPAPFGETSLADLRARLNSRVAGRRFADVPQLVQDLSEAFDPEDRGTVTTVLSTLLETLVEETEERLMIGGTANLTRFGHDFPLTIRPVLEALEEQVVLLKLLGSAGDSGMTVRIGHENAYEGLNSTSVVSVGYGSGDEAVAKLGVVGPTRMDYPGTMGAVRAVARYVGQILAES</sequence>
<organism>
    <name type="scientific">Streptomyces avermitilis (strain ATCC 31267 / DSM 46492 / JCM 5070 / NBRC 14893 / NCIMB 12804 / NRRL 8165 / MA-4680)</name>
    <dbReference type="NCBI Taxonomy" id="227882"/>
    <lineage>
        <taxon>Bacteria</taxon>
        <taxon>Bacillati</taxon>
        <taxon>Actinomycetota</taxon>
        <taxon>Actinomycetes</taxon>
        <taxon>Kitasatosporales</taxon>
        <taxon>Streptomycetaceae</taxon>
        <taxon>Streptomyces</taxon>
    </lineage>
</organism>
<keyword id="KW-1185">Reference proteome</keyword>
<keyword id="KW-0678">Repressor</keyword>
<keyword id="KW-0346">Stress response</keyword>
<keyword id="KW-0804">Transcription</keyword>
<keyword id="KW-0805">Transcription regulation</keyword>
<evidence type="ECO:0000255" key="1">
    <source>
        <dbReference type="HAMAP-Rule" id="MF_00081"/>
    </source>
</evidence>
<accession>Q82BY5</accession>
<protein>
    <recommendedName>
        <fullName evidence="1">Heat-inducible transcription repressor HrcA</fullName>
    </recommendedName>
</protein>
<gene>
    <name evidence="1" type="primary">hrcA</name>
    <name type="ordered locus">SAV_5569</name>
</gene>
<name>HRCA_STRAW</name>
<feature type="chain" id="PRO_0000182537" description="Heat-inducible transcription repressor HrcA">
    <location>
        <begin position="1"/>
        <end position="338"/>
    </location>
</feature>
<reference key="1">
    <citation type="journal article" date="2001" name="Proc. Natl. Acad. Sci. U.S.A.">
        <title>Genome sequence of an industrial microorganism Streptomyces avermitilis: deducing the ability of producing secondary metabolites.</title>
        <authorList>
            <person name="Omura S."/>
            <person name="Ikeda H."/>
            <person name="Ishikawa J."/>
            <person name="Hanamoto A."/>
            <person name="Takahashi C."/>
            <person name="Shinose M."/>
            <person name="Takahashi Y."/>
            <person name="Horikawa H."/>
            <person name="Nakazawa H."/>
            <person name="Osonoe T."/>
            <person name="Kikuchi H."/>
            <person name="Shiba T."/>
            <person name="Sakaki Y."/>
            <person name="Hattori M."/>
        </authorList>
    </citation>
    <scope>NUCLEOTIDE SEQUENCE [LARGE SCALE GENOMIC DNA]</scope>
    <source>
        <strain>ATCC 31267 / DSM 46492 / JCM 5070 / NBRC 14893 / NCIMB 12804 / NRRL 8165 / MA-4680</strain>
    </source>
</reference>
<reference key="2">
    <citation type="journal article" date="2003" name="Nat. Biotechnol.">
        <title>Complete genome sequence and comparative analysis of the industrial microorganism Streptomyces avermitilis.</title>
        <authorList>
            <person name="Ikeda H."/>
            <person name="Ishikawa J."/>
            <person name="Hanamoto A."/>
            <person name="Shinose M."/>
            <person name="Kikuchi H."/>
            <person name="Shiba T."/>
            <person name="Sakaki Y."/>
            <person name="Hattori M."/>
            <person name="Omura S."/>
        </authorList>
    </citation>
    <scope>NUCLEOTIDE SEQUENCE [LARGE SCALE GENOMIC DNA]</scope>
    <source>
        <strain>ATCC 31267 / DSM 46492 / JCM 5070 / NBRC 14893 / NCIMB 12804 / NRRL 8165 / MA-4680</strain>
    </source>
</reference>
<comment type="function">
    <text evidence="1">Negative regulator of class I heat shock genes (grpE-dnaK-dnaJ and groELS operons). Prevents heat-shock induction of these operons.</text>
</comment>
<comment type="similarity">
    <text evidence="1">Belongs to the HrcA family.</text>
</comment>